<protein>
    <recommendedName>
        <fullName>Pseudohemocyanin-2</fullName>
    </recommendedName>
</protein>
<keyword id="KW-0903">Direct protein sequencing</keyword>
<keyword id="KW-0325">Glycoprotein</keyword>
<keyword id="KW-0732">Signal</keyword>
<accession>Q6KF81</accession>
<comment type="function">
    <text evidence="2">Does not function as a hemocyanin.</text>
</comment>
<comment type="subunit">
    <text evidence="2">Hexamer.</text>
</comment>
<comment type="tissue specificity">
    <text evidence="2">Strongly expressed in ovaries. Also expressed in heart. Not detected in hepatopancreas, gills, connective tissue or muscle.</text>
</comment>
<comment type="miscellaneous">
    <text evidence="2">Does not bind copper.</text>
</comment>
<comment type="similarity">
    <text evidence="1">Belongs to the tyrosinase family. Hemocyanin subfamily.</text>
</comment>
<organism>
    <name type="scientific">Homarus americanus</name>
    <name type="common">American lobster</name>
    <dbReference type="NCBI Taxonomy" id="6706"/>
    <lineage>
        <taxon>Eukaryota</taxon>
        <taxon>Metazoa</taxon>
        <taxon>Ecdysozoa</taxon>
        <taxon>Arthropoda</taxon>
        <taxon>Crustacea</taxon>
        <taxon>Multicrustacea</taxon>
        <taxon>Malacostraca</taxon>
        <taxon>Eumalacostraca</taxon>
        <taxon>Eucarida</taxon>
        <taxon>Decapoda</taxon>
        <taxon>Pleocyemata</taxon>
        <taxon>Astacidea</taxon>
        <taxon>Nephropoidea</taxon>
        <taxon>Nephropidae</taxon>
        <taxon>Homarus</taxon>
    </lineage>
</organism>
<sequence length="681" mass="79222">VLLCSLVAATAAWPYFGGFQRDEPDGVPTAQKQHDINFLLHKLYEPLHEANLKALEDSFDPLAHTANMPDGGVAVNKLMQEVKTQHLEERHHWFSVFNATQREEALLLVKVLLQCQDWPTAIGNAVYFRKMMNEETYVYALYTAIKHSPLTKHVVLPPLYEIMPHFFTSSEVIQQAYRAKLIEKPGRFNMNFTGTQNNPEHKIAYFGEDIGLSTHYINWHIEYPFWWNETFGYQIERRGENYFWVHHQLVNRFEAERISNHLQKIEKLHWERNLHEGFDPHTSYKNGNPFPFRHDDIHIEDVDKVAEVRDMIVMENRIRDAIAHGYVIDKEGNKVDINNEHGIDILGDIIESCVYNPYNEYYGSLHNMGHMMLGHQGDPHAKYYDTPSVLEHYETALRDPAFYKLHKYIDDLFRKHKDHLKPYSQEDLLFPGVAVNMIDIDGPLETYFEDYEYSLMNAMDDKEEMIWEDSMEISAIIPRLRHKDFSFKVNIMNNNDENKLSTIRIFAWPHRDVNGVIMPFNEGRWHAIELDKFQKELIPGENTITRKSSESSVTVPDVPSLKSLHEQTEAAIAGSSELNLDEFVSATGLPNRLLIPKGNEAGVEFKLVVAVTDGVADSVNDEINLTTKFHHYGHHGVYLDKKPHGYPLDRRVPDERLFHEIPNFGETIVKVFNRDEHVYHH</sequence>
<reference evidence="3 4" key="1">
    <citation type="journal article" date="1999" name="J. Biol. Chem.">
        <title>Identification, molecular cloning and phylogenetic analysis of a non-respiratory pseudo-hemocyanin of Homarus americanus.</title>
        <authorList>
            <person name="Burmester T."/>
        </authorList>
    </citation>
    <scope>NUCLEOTIDE SEQUENCE [MRNA]</scope>
    <scope>PROTEIN SEQUENCE OF 22-33</scope>
    <scope>SUBUNIT</scope>
    <scope>TISSUE SPECIFICITY</scope>
    <source>
        <tissue evidence="2">Hemolymph</tissue>
        <tissue evidence="4">Thorax</tissue>
    </source>
</reference>
<evidence type="ECO:0000255" key="1"/>
<evidence type="ECO:0000269" key="2">
    <source>
    </source>
</evidence>
<evidence type="ECO:0000305" key="3"/>
<evidence type="ECO:0000312" key="4">
    <source>
        <dbReference type="EMBL" id="CAB38043.1"/>
    </source>
</evidence>
<name>PHCY2_HOMAM</name>
<gene>
    <name evidence="4" type="primary">phc-2</name>
</gene>
<feature type="signal peptide" evidence="2">
    <location>
        <begin position="1" status="less than"/>
        <end position="21"/>
    </location>
</feature>
<feature type="chain" id="PRO_0000234530" description="Pseudohemocyanin-2">
    <location>
        <begin position="22"/>
        <end position="681"/>
    </location>
</feature>
<feature type="glycosylation site" description="N-linked (GlcNAc...) asparagine" evidence="1">
    <location>
        <position position="98"/>
    </location>
</feature>
<feature type="glycosylation site" description="N-linked (GlcNAc...) asparagine" evidence="1">
    <location>
        <position position="191"/>
    </location>
</feature>
<feature type="glycosylation site" description="N-linked (GlcNAc...) asparagine" evidence="1">
    <location>
        <position position="228"/>
    </location>
</feature>
<feature type="glycosylation site" description="N-linked (GlcNAc...) asparagine" evidence="1">
    <location>
        <position position="624"/>
    </location>
</feature>
<feature type="non-terminal residue" evidence="4">
    <location>
        <position position="1"/>
    </location>
</feature>
<proteinExistence type="evidence at protein level"/>
<dbReference type="EMBL" id="AJ132142">
    <property type="protein sequence ID" value="CAB38043.1"/>
    <property type="molecule type" value="mRNA"/>
</dbReference>
<dbReference type="SMR" id="Q6KF81"/>
<dbReference type="GlyCosmos" id="Q6KF81">
    <property type="glycosylation" value="4 sites, No reported glycans"/>
</dbReference>
<dbReference type="OrthoDB" id="6353670at2759"/>
<dbReference type="GO" id="GO:0016491">
    <property type="term" value="F:oxidoreductase activity"/>
    <property type="evidence" value="ECO:0007669"/>
    <property type="project" value="InterPro"/>
</dbReference>
<dbReference type="Gene3D" id="1.10.1280.10">
    <property type="entry name" value="Di-copper center containing domain from catechol oxidase"/>
    <property type="match status" value="1"/>
</dbReference>
<dbReference type="Gene3D" id="2.60.40.1520">
    <property type="entry name" value="Hemocyanin, C-terminal domain"/>
    <property type="match status" value="1"/>
</dbReference>
<dbReference type="Gene3D" id="1.20.1370.10">
    <property type="entry name" value="Hemocyanin, N-terminal domain"/>
    <property type="match status" value="1"/>
</dbReference>
<dbReference type="InterPro" id="IPR008922">
    <property type="entry name" value="Di-copper_centre_dom_sf"/>
</dbReference>
<dbReference type="InterPro" id="IPR013788">
    <property type="entry name" value="Hemocyanin/hexamerin"/>
</dbReference>
<dbReference type="InterPro" id="IPR000896">
    <property type="entry name" value="Hemocyanin/hexamerin_mid_dom"/>
</dbReference>
<dbReference type="InterPro" id="IPR005203">
    <property type="entry name" value="Hemocyanin_C"/>
</dbReference>
<dbReference type="InterPro" id="IPR037020">
    <property type="entry name" value="Hemocyanin_C_sf"/>
</dbReference>
<dbReference type="InterPro" id="IPR005204">
    <property type="entry name" value="Hemocyanin_N"/>
</dbReference>
<dbReference type="InterPro" id="IPR036697">
    <property type="entry name" value="Hemocyanin_N_sf"/>
</dbReference>
<dbReference type="InterPro" id="IPR014756">
    <property type="entry name" value="Ig_E-set"/>
</dbReference>
<dbReference type="InterPro" id="IPR002227">
    <property type="entry name" value="Tyrosinase_Cu-bd"/>
</dbReference>
<dbReference type="PANTHER" id="PTHR11511:SF5">
    <property type="entry name" value="FAT-BODY PROTEIN 1-RELATED"/>
    <property type="match status" value="1"/>
</dbReference>
<dbReference type="PANTHER" id="PTHR11511">
    <property type="entry name" value="LARVAL STORAGE PROTEIN/PHENOLOXIDASE"/>
    <property type="match status" value="1"/>
</dbReference>
<dbReference type="Pfam" id="PF03723">
    <property type="entry name" value="Hemocyanin_C"/>
    <property type="match status" value="1"/>
</dbReference>
<dbReference type="Pfam" id="PF00372">
    <property type="entry name" value="Hemocyanin_M"/>
    <property type="match status" value="1"/>
</dbReference>
<dbReference type="Pfam" id="PF03722">
    <property type="entry name" value="Hemocyanin_N"/>
    <property type="match status" value="1"/>
</dbReference>
<dbReference type="PRINTS" id="PR00187">
    <property type="entry name" value="HAEMOCYANIN"/>
</dbReference>
<dbReference type="SUPFAM" id="SSF48056">
    <property type="entry name" value="Di-copper centre-containing domain"/>
    <property type="match status" value="1"/>
</dbReference>
<dbReference type="SUPFAM" id="SSF81296">
    <property type="entry name" value="E set domains"/>
    <property type="match status" value="1"/>
</dbReference>
<dbReference type="SUPFAM" id="SSF48050">
    <property type="entry name" value="Hemocyanin, N-terminal domain"/>
    <property type="match status" value="1"/>
</dbReference>
<dbReference type="PROSITE" id="PS00210">
    <property type="entry name" value="HEMOCYANIN_2"/>
    <property type="match status" value="1"/>
</dbReference>
<dbReference type="PROSITE" id="PS00498">
    <property type="entry name" value="TYROSINASE_2"/>
    <property type="match status" value="1"/>
</dbReference>